<protein>
    <recommendedName>
        <fullName evidence="1">Thymidine phosphorylase</fullName>
        <ecNumber evidence="1">2.4.2.4</ecNumber>
    </recommendedName>
    <alternativeName>
        <fullName evidence="1">TdRPase</fullName>
    </alternativeName>
</protein>
<reference key="1">
    <citation type="journal article" date="2001" name="Nature">
        <title>Genome sequence of Yersinia pestis, the causative agent of plague.</title>
        <authorList>
            <person name="Parkhill J."/>
            <person name="Wren B.W."/>
            <person name="Thomson N.R."/>
            <person name="Titball R.W."/>
            <person name="Holden M.T.G."/>
            <person name="Prentice M.B."/>
            <person name="Sebaihia M."/>
            <person name="James K.D."/>
            <person name="Churcher C.M."/>
            <person name="Mungall K.L."/>
            <person name="Baker S."/>
            <person name="Basham D."/>
            <person name="Bentley S.D."/>
            <person name="Brooks K."/>
            <person name="Cerdeno-Tarraga A.-M."/>
            <person name="Chillingworth T."/>
            <person name="Cronin A."/>
            <person name="Davies R.M."/>
            <person name="Davis P."/>
            <person name="Dougan G."/>
            <person name="Feltwell T."/>
            <person name="Hamlin N."/>
            <person name="Holroyd S."/>
            <person name="Jagels K."/>
            <person name="Karlyshev A.V."/>
            <person name="Leather S."/>
            <person name="Moule S."/>
            <person name="Oyston P.C.F."/>
            <person name="Quail M.A."/>
            <person name="Rutherford K.M."/>
            <person name="Simmonds M."/>
            <person name="Skelton J."/>
            <person name="Stevens K."/>
            <person name="Whitehead S."/>
            <person name="Barrell B.G."/>
        </authorList>
    </citation>
    <scope>NUCLEOTIDE SEQUENCE [LARGE SCALE GENOMIC DNA]</scope>
    <source>
        <strain>CO-92 / Biovar Orientalis</strain>
    </source>
</reference>
<reference key="2">
    <citation type="journal article" date="2002" name="J. Bacteriol.">
        <title>Genome sequence of Yersinia pestis KIM.</title>
        <authorList>
            <person name="Deng W."/>
            <person name="Burland V."/>
            <person name="Plunkett G. III"/>
            <person name="Boutin A."/>
            <person name="Mayhew G.F."/>
            <person name="Liss P."/>
            <person name="Perna N.T."/>
            <person name="Rose D.J."/>
            <person name="Mau B."/>
            <person name="Zhou S."/>
            <person name="Schwartz D.C."/>
            <person name="Fetherston J.D."/>
            <person name="Lindler L.E."/>
            <person name="Brubaker R.R."/>
            <person name="Plano G.V."/>
            <person name="Straley S.C."/>
            <person name="McDonough K.A."/>
            <person name="Nilles M.L."/>
            <person name="Matson J.S."/>
            <person name="Blattner F.R."/>
            <person name="Perry R.D."/>
        </authorList>
    </citation>
    <scope>NUCLEOTIDE SEQUENCE [LARGE SCALE GENOMIC DNA]</scope>
    <source>
        <strain>KIM10+ / Biovar Mediaevalis</strain>
    </source>
</reference>
<reference key="3">
    <citation type="journal article" date="2004" name="DNA Res.">
        <title>Complete genome sequence of Yersinia pestis strain 91001, an isolate avirulent to humans.</title>
        <authorList>
            <person name="Song Y."/>
            <person name="Tong Z."/>
            <person name="Wang J."/>
            <person name="Wang L."/>
            <person name="Guo Z."/>
            <person name="Han Y."/>
            <person name="Zhang J."/>
            <person name="Pei D."/>
            <person name="Zhou D."/>
            <person name="Qin H."/>
            <person name="Pang X."/>
            <person name="Han Y."/>
            <person name="Zhai J."/>
            <person name="Li M."/>
            <person name="Cui B."/>
            <person name="Qi Z."/>
            <person name="Jin L."/>
            <person name="Dai R."/>
            <person name="Chen F."/>
            <person name="Li S."/>
            <person name="Ye C."/>
            <person name="Du Z."/>
            <person name="Lin W."/>
            <person name="Wang J."/>
            <person name="Yu J."/>
            <person name="Yang H."/>
            <person name="Wang J."/>
            <person name="Huang P."/>
            <person name="Yang R."/>
        </authorList>
    </citation>
    <scope>NUCLEOTIDE SEQUENCE [LARGE SCALE GENOMIC DNA]</scope>
    <source>
        <strain>91001 / Biovar Mediaevalis</strain>
    </source>
</reference>
<gene>
    <name evidence="1" type="primary">deoA</name>
    <name type="ordered locus">YPO0437</name>
    <name type="ordered locus">y3742</name>
    <name type="ordered locus">YP_3744</name>
</gene>
<organism>
    <name type="scientific">Yersinia pestis</name>
    <dbReference type="NCBI Taxonomy" id="632"/>
    <lineage>
        <taxon>Bacteria</taxon>
        <taxon>Pseudomonadati</taxon>
        <taxon>Pseudomonadota</taxon>
        <taxon>Gammaproteobacteria</taxon>
        <taxon>Enterobacterales</taxon>
        <taxon>Yersiniaceae</taxon>
        <taxon>Yersinia</taxon>
    </lineage>
</organism>
<feature type="chain" id="PRO_0000059075" description="Thymidine phosphorylase">
    <location>
        <begin position="1"/>
        <end position="440"/>
    </location>
</feature>
<feature type="sequence conflict" description="In Ref. 1 and 2." evidence="2" ref="1 2">
    <original>E</original>
    <variation>A</variation>
    <location>
        <position position="413"/>
    </location>
</feature>
<comment type="function">
    <text evidence="1">The enzymes which catalyze the reversible phosphorolysis of pyrimidine nucleosides are involved in the degradation of these compounds and in their utilization as carbon and energy sources, or in the rescue of pyrimidine bases for nucleotide synthesis.</text>
</comment>
<comment type="catalytic activity">
    <reaction evidence="1">
        <text>thymidine + phosphate = 2-deoxy-alpha-D-ribose 1-phosphate + thymine</text>
        <dbReference type="Rhea" id="RHEA:16037"/>
        <dbReference type="ChEBI" id="CHEBI:17748"/>
        <dbReference type="ChEBI" id="CHEBI:17821"/>
        <dbReference type="ChEBI" id="CHEBI:43474"/>
        <dbReference type="ChEBI" id="CHEBI:57259"/>
        <dbReference type="EC" id="2.4.2.4"/>
    </reaction>
</comment>
<comment type="pathway">
    <text evidence="1">Pyrimidine metabolism; dTMP biosynthesis via salvage pathway; dTMP from thymine: step 1/2.</text>
</comment>
<comment type="subunit">
    <text evidence="1">Homodimer.</text>
</comment>
<comment type="similarity">
    <text evidence="1">Belongs to the thymidine/pyrimidine-nucleoside phosphorylase family.</text>
</comment>
<comment type="caution">
    <text evidence="2">In strains CO-92 and KIM5 it could be the product of a pseudogene.</text>
</comment>
<comment type="sequence caution" evidence="2">
    <conflict type="frameshift">
        <sequence resource="EMBL" id="AE009952"/>
    </conflict>
</comment>
<comment type="sequence caution" evidence="2">
    <conflict type="frameshift">
        <sequence resource="EMBL" id="AL590842"/>
    </conflict>
</comment>
<sequence length="440" mass="46975">MFLAQEIIRKKRDGQPLSEEEIRFFINGIRDNVVSEGQIAALAMTIYFHDMSMPERVALTMAMRDSGTVLNWKSLNLNGPLVDKHSTGGVGDVTSLMLGPMVAACGGYVPMISGRGLGHTGGTLDKLEAIPGFDIFPDDNAFRKIIQNVGVAIIGQTSSLAPADKRFYATRDITATVDSIPLITASILAKKLAEGLDALVMDVKVGSGAFMPTYSLSADLAQAIVGVANGAGCKTTALLTDMNQVLASSAGNGVEVREAVRFLTGEYRNPRLLEVTMALCVEMLLSGGLAHDEADARAKLQAVLDNGKAAEVFGRMVAAQKGPADFVERYDSYLPVATLSKPVFAEQTGIITAMDTRALGMAVVALGGGRRRATDPIDYSVGLTEMARLGTRVDGQQPLAVIHANNEDDWQQEAEVVRAAITLGNNTPEETPVIYRRITE</sequence>
<keyword id="KW-0328">Glycosyltransferase</keyword>
<keyword id="KW-1185">Reference proteome</keyword>
<keyword id="KW-0808">Transferase</keyword>
<proteinExistence type="inferred from homology"/>
<accession>Q74PY8</accession>
<dbReference type="EC" id="2.4.2.4" evidence="1"/>
<dbReference type="EMBL" id="AL590842">
    <property type="status" value="NOT_ANNOTATED_CDS"/>
    <property type="molecule type" value="Genomic_DNA"/>
</dbReference>
<dbReference type="EMBL" id="AE009952">
    <property type="status" value="NOT_ANNOTATED_CDS"/>
    <property type="molecule type" value="Genomic_DNA"/>
</dbReference>
<dbReference type="EMBL" id="AE017042">
    <property type="protein sequence ID" value="AAS63892.1"/>
    <property type="molecule type" value="Genomic_DNA"/>
</dbReference>
<dbReference type="SMR" id="Q74PY8"/>
<dbReference type="EnsemblBacteria" id="AAS63892">
    <property type="protein sequence ID" value="AAS63892"/>
    <property type="gene ID" value="YP_3744"/>
</dbReference>
<dbReference type="KEGG" id="ypm:YP_3744"/>
<dbReference type="HOGENOM" id="CLU_025040_0_1_6"/>
<dbReference type="UniPathway" id="UPA00578">
    <property type="reaction ID" value="UER00638"/>
</dbReference>
<dbReference type="Proteomes" id="UP000000815">
    <property type="component" value="Chromosome"/>
</dbReference>
<dbReference type="Proteomes" id="UP000001019">
    <property type="component" value="Chromosome"/>
</dbReference>
<dbReference type="Proteomes" id="UP000002490">
    <property type="component" value="Chromosome"/>
</dbReference>
<dbReference type="GO" id="GO:0005829">
    <property type="term" value="C:cytosol"/>
    <property type="evidence" value="ECO:0000318"/>
    <property type="project" value="GO_Central"/>
</dbReference>
<dbReference type="GO" id="GO:0004645">
    <property type="term" value="F:1,4-alpha-oligoglucan phosphorylase activity"/>
    <property type="evidence" value="ECO:0007669"/>
    <property type="project" value="InterPro"/>
</dbReference>
<dbReference type="GO" id="GO:0009032">
    <property type="term" value="F:thymidine phosphorylase activity"/>
    <property type="evidence" value="ECO:0000318"/>
    <property type="project" value="GO_Central"/>
</dbReference>
<dbReference type="GO" id="GO:0006206">
    <property type="term" value="P:pyrimidine nucleobase metabolic process"/>
    <property type="evidence" value="ECO:0007669"/>
    <property type="project" value="InterPro"/>
</dbReference>
<dbReference type="GO" id="GO:0046104">
    <property type="term" value="P:thymidine metabolic process"/>
    <property type="evidence" value="ECO:0007669"/>
    <property type="project" value="UniProtKB-UniRule"/>
</dbReference>
<dbReference type="FunFam" id="3.40.1030.10:FF:000001">
    <property type="entry name" value="Thymidine phosphorylase"/>
    <property type="match status" value="1"/>
</dbReference>
<dbReference type="FunFam" id="3.90.1170.30:FF:000001">
    <property type="entry name" value="Thymidine phosphorylase"/>
    <property type="match status" value="1"/>
</dbReference>
<dbReference type="Gene3D" id="3.40.1030.10">
    <property type="entry name" value="Nucleoside phosphorylase/phosphoribosyltransferase catalytic domain"/>
    <property type="match status" value="1"/>
</dbReference>
<dbReference type="Gene3D" id="3.90.1170.30">
    <property type="entry name" value="Pyrimidine nucleoside phosphorylase-like, C-terminal domain"/>
    <property type="match status" value="1"/>
</dbReference>
<dbReference type="Gene3D" id="1.20.970.10">
    <property type="entry name" value="Transferase, Pyrimidine Nucleoside Phosphorylase, Chain C"/>
    <property type="match status" value="1"/>
</dbReference>
<dbReference type="HAMAP" id="MF_01628">
    <property type="entry name" value="Thymid_phosp"/>
    <property type="match status" value="1"/>
</dbReference>
<dbReference type="InterPro" id="IPR000312">
    <property type="entry name" value="Glycosyl_Trfase_fam3"/>
</dbReference>
<dbReference type="InterPro" id="IPR017459">
    <property type="entry name" value="Glycosyl_Trfase_fam3_N_dom"/>
</dbReference>
<dbReference type="InterPro" id="IPR036320">
    <property type="entry name" value="Glycosyl_Trfase_fam3_N_dom_sf"/>
</dbReference>
<dbReference type="InterPro" id="IPR035902">
    <property type="entry name" value="Nuc_phospho_transferase"/>
</dbReference>
<dbReference type="InterPro" id="IPR036566">
    <property type="entry name" value="PYNP-like_C_sf"/>
</dbReference>
<dbReference type="InterPro" id="IPR013102">
    <property type="entry name" value="PYNP_C"/>
</dbReference>
<dbReference type="InterPro" id="IPR018090">
    <property type="entry name" value="Pyrmidine_PPas_bac/euk"/>
</dbReference>
<dbReference type="InterPro" id="IPR017872">
    <property type="entry name" value="Pyrmidine_PPase_CS"/>
</dbReference>
<dbReference type="InterPro" id="IPR000053">
    <property type="entry name" value="Thymidine/pyrmidine_PPase"/>
</dbReference>
<dbReference type="InterPro" id="IPR013465">
    <property type="entry name" value="Thymidine_Pase"/>
</dbReference>
<dbReference type="NCBIfam" id="NF004490">
    <property type="entry name" value="PRK05820.1"/>
    <property type="match status" value="1"/>
</dbReference>
<dbReference type="NCBIfam" id="TIGR02643">
    <property type="entry name" value="T_phosphoryl"/>
    <property type="match status" value="1"/>
</dbReference>
<dbReference type="NCBIfam" id="TIGR02644">
    <property type="entry name" value="Y_phosphoryl"/>
    <property type="match status" value="1"/>
</dbReference>
<dbReference type="PANTHER" id="PTHR10515">
    <property type="entry name" value="THYMIDINE PHOSPHORYLASE"/>
    <property type="match status" value="1"/>
</dbReference>
<dbReference type="PANTHER" id="PTHR10515:SF0">
    <property type="entry name" value="THYMIDINE PHOSPHORYLASE"/>
    <property type="match status" value="1"/>
</dbReference>
<dbReference type="Pfam" id="PF02885">
    <property type="entry name" value="Glycos_trans_3N"/>
    <property type="match status" value="1"/>
</dbReference>
<dbReference type="Pfam" id="PF00591">
    <property type="entry name" value="Glycos_transf_3"/>
    <property type="match status" value="1"/>
</dbReference>
<dbReference type="Pfam" id="PF07831">
    <property type="entry name" value="PYNP_C"/>
    <property type="match status" value="1"/>
</dbReference>
<dbReference type="PIRSF" id="PIRSF000478">
    <property type="entry name" value="TP_PyNP"/>
    <property type="match status" value="1"/>
</dbReference>
<dbReference type="SMART" id="SM00941">
    <property type="entry name" value="PYNP_C"/>
    <property type="match status" value="1"/>
</dbReference>
<dbReference type="SUPFAM" id="SSF52418">
    <property type="entry name" value="Nucleoside phosphorylase/phosphoribosyltransferase catalytic domain"/>
    <property type="match status" value="1"/>
</dbReference>
<dbReference type="SUPFAM" id="SSF47648">
    <property type="entry name" value="Nucleoside phosphorylase/phosphoribosyltransferase N-terminal domain"/>
    <property type="match status" value="1"/>
</dbReference>
<dbReference type="SUPFAM" id="SSF54680">
    <property type="entry name" value="Pyrimidine nucleoside phosphorylase C-terminal domain"/>
    <property type="match status" value="1"/>
</dbReference>
<dbReference type="PROSITE" id="PS00647">
    <property type="entry name" value="THYMID_PHOSPHORYLASE"/>
    <property type="match status" value="1"/>
</dbReference>
<name>TYPH_YERPE</name>
<evidence type="ECO:0000255" key="1">
    <source>
        <dbReference type="HAMAP-Rule" id="MF_01628"/>
    </source>
</evidence>
<evidence type="ECO:0000305" key="2"/>